<feature type="chain" id="PRO_5000099848" description="Probable potassium transport system protein Kup 2">
    <location>
        <begin position="1"/>
        <end position="621"/>
    </location>
</feature>
<feature type="transmembrane region" description="Helical" evidence="1">
    <location>
        <begin position="12"/>
        <end position="32"/>
    </location>
</feature>
<feature type="transmembrane region" description="Helical" evidence="1">
    <location>
        <begin position="52"/>
        <end position="72"/>
    </location>
</feature>
<feature type="transmembrane region" description="Helical" evidence="1">
    <location>
        <begin position="101"/>
        <end position="121"/>
    </location>
</feature>
<feature type="transmembrane region" description="Helical" evidence="1">
    <location>
        <begin position="138"/>
        <end position="158"/>
    </location>
</feature>
<feature type="transmembrane region" description="Helical" evidence="1">
    <location>
        <begin position="166"/>
        <end position="186"/>
    </location>
</feature>
<feature type="transmembrane region" description="Helical" evidence="1">
    <location>
        <begin position="213"/>
        <end position="233"/>
    </location>
</feature>
<feature type="transmembrane region" description="Helical" evidence="1">
    <location>
        <begin position="249"/>
        <end position="269"/>
    </location>
</feature>
<feature type="transmembrane region" description="Helical" evidence="1">
    <location>
        <begin position="286"/>
        <end position="306"/>
    </location>
</feature>
<feature type="transmembrane region" description="Helical" evidence="1">
    <location>
        <begin position="338"/>
        <end position="358"/>
    </location>
</feature>
<feature type="transmembrane region" description="Helical" evidence="1">
    <location>
        <begin position="370"/>
        <end position="390"/>
    </location>
</feature>
<feature type="transmembrane region" description="Helical" evidence="1">
    <location>
        <begin position="396"/>
        <end position="416"/>
    </location>
</feature>
<feature type="transmembrane region" description="Helical" evidence="1">
    <location>
        <begin position="420"/>
        <end position="440"/>
    </location>
</feature>
<keyword id="KW-0997">Cell inner membrane</keyword>
<keyword id="KW-1003">Cell membrane</keyword>
<keyword id="KW-0406">Ion transport</keyword>
<keyword id="KW-0472">Membrane</keyword>
<keyword id="KW-0630">Potassium</keyword>
<keyword id="KW-0633">Potassium transport</keyword>
<keyword id="KW-0769">Symport</keyword>
<keyword id="KW-0812">Transmembrane</keyword>
<keyword id="KW-1133">Transmembrane helix</keyword>
<keyword id="KW-0813">Transport</keyword>
<accession>Q47GU1</accession>
<gene>
    <name evidence="1" type="primary">kup2</name>
    <name type="ordered locus">Daro_1184</name>
</gene>
<evidence type="ECO:0000255" key="1">
    <source>
        <dbReference type="HAMAP-Rule" id="MF_01522"/>
    </source>
</evidence>
<dbReference type="EMBL" id="CP000089">
    <property type="protein sequence ID" value="AAZ45940.1"/>
    <property type="molecule type" value="Genomic_DNA"/>
</dbReference>
<dbReference type="STRING" id="159087.Daro_1184"/>
<dbReference type="KEGG" id="dar:Daro_1184"/>
<dbReference type="eggNOG" id="COG3158">
    <property type="taxonomic scope" value="Bacteria"/>
</dbReference>
<dbReference type="HOGENOM" id="CLU_008142_4_2_4"/>
<dbReference type="OrthoDB" id="9805577at2"/>
<dbReference type="GO" id="GO:0005886">
    <property type="term" value="C:plasma membrane"/>
    <property type="evidence" value="ECO:0007669"/>
    <property type="project" value="UniProtKB-SubCell"/>
</dbReference>
<dbReference type="GO" id="GO:0015079">
    <property type="term" value="F:potassium ion transmembrane transporter activity"/>
    <property type="evidence" value="ECO:0007669"/>
    <property type="project" value="UniProtKB-UniRule"/>
</dbReference>
<dbReference type="GO" id="GO:0015293">
    <property type="term" value="F:symporter activity"/>
    <property type="evidence" value="ECO:0007669"/>
    <property type="project" value="UniProtKB-UniRule"/>
</dbReference>
<dbReference type="HAMAP" id="MF_01522">
    <property type="entry name" value="Kup"/>
    <property type="match status" value="1"/>
</dbReference>
<dbReference type="InterPro" id="IPR003855">
    <property type="entry name" value="K+_transporter"/>
</dbReference>
<dbReference type="InterPro" id="IPR053952">
    <property type="entry name" value="K_trans_C"/>
</dbReference>
<dbReference type="InterPro" id="IPR053951">
    <property type="entry name" value="K_trans_N"/>
</dbReference>
<dbReference type="InterPro" id="IPR023051">
    <property type="entry name" value="Kup"/>
</dbReference>
<dbReference type="PANTHER" id="PTHR30540:SF79">
    <property type="entry name" value="LOW AFFINITY POTASSIUM TRANSPORT SYSTEM PROTEIN KUP"/>
    <property type="match status" value="1"/>
</dbReference>
<dbReference type="PANTHER" id="PTHR30540">
    <property type="entry name" value="OSMOTIC STRESS POTASSIUM TRANSPORTER"/>
    <property type="match status" value="1"/>
</dbReference>
<dbReference type="Pfam" id="PF02705">
    <property type="entry name" value="K_trans"/>
    <property type="match status" value="1"/>
</dbReference>
<dbReference type="Pfam" id="PF22776">
    <property type="entry name" value="K_trans_C"/>
    <property type="match status" value="1"/>
</dbReference>
<reference key="1">
    <citation type="journal article" date="2009" name="BMC Genomics">
        <title>Metabolic analysis of the soil microbe Dechloromonas aromatica str. RCB: indications of a surprisingly complex life-style and cryptic anaerobic pathways for aromatic degradation.</title>
        <authorList>
            <person name="Salinero K.K."/>
            <person name="Keller K."/>
            <person name="Feil W.S."/>
            <person name="Feil H."/>
            <person name="Trong S."/>
            <person name="Di Bartolo G."/>
            <person name="Lapidus A."/>
        </authorList>
    </citation>
    <scope>NUCLEOTIDE SEQUENCE [LARGE SCALE GENOMIC DNA]</scope>
    <source>
        <strain>RCB</strain>
    </source>
</reference>
<sequence length="621" mass="67629">MSSHSKQALPAITVAAIGVVFGDIGTSPLYALKEIFNGHHPIPVTPENILGVLSLVFWAIIVLVTIKYVAIIMRADNRGEGGSLALLALVTERAKNPRLSWIITLLGIFAAALFYGDSMITPAISVLSAVEGLEIITPDLKSYVIPITLGILTGLFFIQKHGTGAVGKLFGPVMVAWFGILAILGLKEIAYNPAVLLALNPLFAIVFVAEHTGLAFLALGSVVLAVTGGEALYTDMGHFGRFPIRLAWFGFVMPALVLNYFGQGALLLIEPEAIASPFFHLAPDWALIPMVGLATAATVIASQAVISGAFSVARQSIQMGLLPRMQIIHTSGMEEGQIYVPFTNWSLYLAVIALVIGFKNSSNLAAAYGIAVTGTMLIDTILVAFVMVLMWKWNKLLVALVAGTLLLVDIAFFAANAIKIPEGGWFPLAMGLVSFTVLTTWRRGRRMVSEEMAKQSIPMSDFLQSIDDVHRIYGTAIFMTSAKDGVPPALLHNLKHNQVLHERVVLVTVQTTDTPTVNDMERIYLHRMQKGFMRLIVRYGFMESPDIPGALELCKGHGERFDMMETTFYLSRETIVPSMARGMLPWRARLFAVMSKNATSASDFFHIPTNRVVELGTQLVI</sequence>
<organism>
    <name type="scientific">Dechloromonas aromatica (strain RCB)</name>
    <dbReference type="NCBI Taxonomy" id="159087"/>
    <lineage>
        <taxon>Bacteria</taxon>
        <taxon>Pseudomonadati</taxon>
        <taxon>Pseudomonadota</taxon>
        <taxon>Betaproteobacteria</taxon>
        <taxon>Rhodocyclales</taxon>
        <taxon>Azonexaceae</taxon>
        <taxon>Dechloromonas</taxon>
    </lineage>
</organism>
<protein>
    <recommendedName>
        <fullName evidence="1">Probable potassium transport system protein Kup 2</fullName>
    </recommendedName>
</protein>
<name>KUP2_DECAR</name>
<proteinExistence type="inferred from homology"/>
<comment type="function">
    <text evidence="1">Transport of potassium into the cell. Likely operates as a K(+):H(+) symporter.</text>
</comment>
<comment type="catalytic activity">
    <reaction evidence="1">
        <text>K(+)(in) + H(+)(in) = K(+)(out) + H(+)(out)</text>
        <dbReference type="Rhea" id="RHEA:28490"/>
        <dbReference type="ChEBI" id="CHEBI:15378"/>
        <dbReference type="ChEBI" id="CHEBI:29103"/>
    </reaction>
    <physiologicalReaction direction="right-to-left" evidence="1">
        <dbReference type="Rhea" id="RHEA:28492"/>
    </physiologicalReaction>
</comment>
<comment type="subcellular location">
    <subcellularLocation>
        <location evidence="1">Cell inner membrane</location>
        <topology evidence="1">Multi-pass membrane protein</topology>
    </subcellularLocation>
</comment>
<comment type="similarity">
    <text evidence="1">Belongs to the HAK/KUP transporter (TC 2.A.72) family.</text>
</comment>